<keyword id="KW-0878">Amphibian defense peptide</keyword>
<keyword id="KW-0044">Antibiotic</keyword>
<keyword id="KW-0929">Antimicrobial</keyword>
<keyword id="KW-0903">Direct protein sequencing</keyword>
<keyword id="KW-1015">Disulfide bond</keyword>
<keyword id="KW-0964">Secreted</keyword>
<feature type="peptide" id="PRO_0000043546" description="Brevinin-1Sa">
    <location>
        <begin position="1"/>
        <end position="24"/>
    </location>
</feature>
<feature type="disulfide bond">
    <location>
        <begin position="18"/>
        <end position="24"/>
    </location>
</feature>
<evidence type="ECO:0000269" key="1">
    <source>
    </source>
</evidence>
<evidence type="ECO:0000305" key="2"/>
<reference key="1">
    <citation type="journal article" date="1999" name="J. Pept. Res.">
        <title>Peptides with antimicrobial activity of the brevinin-1 family isolated from skin secretions of the southern leopard frog, Rana sphenocephala.</title>
        <authorList>
            <person name="Conlon J.M."/>
            <person name="Halverson T."/>
            <person name="Dulka J."/>
            <person name="Platz J.E."/>
            <person name="Knoop F.C."/>
        </authorList>
    </citation>
    <scope>PROTEIN SEQUENCE</scope>
    <scope>FUNCTION</scope>
    <scope>MASS SPECTROMETRY</scope>
    <source>
        <tissue>Skin secretion</tissue>
    </source>
</reference>
<organism>
    <name type="scientific">Lithobates sphenocephalus</name>
    <name type="common">Southern leopard frog</name>
    <name type="synonym">Rana sphenocephala</name>
    <dbReference type="NCBI Taxonomy" id="146672"/>
    <lineage>
        <taxon>Eukaryota</taxon>
        <taxon>Metazoa</taxon>
        <taxon>Chordata</taxon>
        <taxon>Craniata</taxon>
        <taxon>Vertebrata</taxon>
        <taxon>Euteleostomi</taxon>
        <taxon>Amphibia</taxon>
        <taxon>Batrachia</taxon>
        <taxon>Anura</taxon>
        <taxon>Neobatrachia</taxon>
        <taxon>Ranoidea</taxon>
        <taxon>Ranidae</taxon>
        <taxon>Lithobates</taxon>
    </lineage>
</organism>
<dbReference type="GO" id="GO:0005576">
    <property type="term" value="C:extracellular region"/>
    <property type="evidence" value="ECO:0007669"/>
    <property type="project" value="UniProtKB-SubCell"/>
</dbReference>
<dbReference type="GO" id="GO:0042742">
    <property type="term" value="P:defense response to bacterium"/>
    <property type="evidence" value="ECO:0007669"/>
    <property type="project" value="UniProtKB-KW"/>
</dbReference>
<dbReference type="InterPro" id="IPR012520">
    <property type="entry name" value="Antimicrobial_frog_1"/>
</dbReference>
<dbReference type="Pfam" id="PF08018">
    <property type="entry name" value="Antimicrobial_1"/>
    <property type="match status" value="1"/>
</dbReference>
<protein>
    <recommendedName>
        <fullName>Brevinin-1Sa</fullName>
    </recommendedName>
</protein>
<proteinExistence type="evidence at protein level"/>
<sequence>FLPAIVGAAGQFLPKIFCAISKKC</sequence>
<comment type="function">
    <text evidence="1">Antibacterial activity against Gram-negative bacterium E.coli.</text>
</comment>
<comment type="subcellular location">
    <subcellularLocation>
        <location>Secreted</location>
    </subcellularLocation>
</comment>
<comment type="tissue specificity">
    <text>Expressed by the skin glands.</text>
</comment>
<comment type="mass spectrometry"/>
<comment type="similarity">
    <text evidence="2">Belongs to the frog skin active peptide (FSAP) family. Brevinin subfamily.</text>
</comment>
<name>BR1A_LITSH</name>
<accession>P82904</accession>